<name>TM243_BOVIN</name>
<accession>A0JNK6</accession>
<evidence type="ECO:0000250" key="1">
    <source>
        <dbReference type="UniProtKB" id="Q9BU79"/>
    </source>
</evidence>
<evidence type="ECO:0000255" key="2"/>
<evidence type="ECO:0000305" key="3"/>
<keyword id="KW-0007">Acetylation</keyword>
<keyword id="KW-0472">Membrane</keyword>
<keyword id="KW-1185">Reference proteome</keyword>
<keyword id="KW-0812">Transmembrane</keyword>
<keyword id="KW-1133">Transmembrane helix</keyword>
<comment type="subcellular location">
    <subcellularLocation>
        <location evidence="3">Membrane</location>
        <topology evidence="3">Multi-pass membrane protein</topology>
    </subcellularLocation>
</comment>
<comment type="similarity">
    <text evidence="3">Belongs to the TMEM243 family.</text>
</comment>
<proteinExistence type="inferred from homology"/>
<feature type="chain" id="PRO_0000290109" description="Transmembrane protein 243">
    <location>
        <begin position="1"/>
        <end position="118"/>
    </location>
</feature>
<feature type="transmembrane region" description="Helical" evidence="2">
    <location>
        <begin position="32"/>
        <end position="52"/>
    </location>
</feature>
<feature type="transmembrane region" description="Helical" evidence="2">
    <location>
        <begin position="62"/>
        <end position="82"/>
    </location>
</feature>
<feature type="transmembrane region" description="Helical" evidence="2">
    <location>
        <begin position="94"/>
        <end position="114"/>
    </location>
</feature>
<feature type="modified residue" description="N-acetylmethionine" evidence="1">
    <location>
        <position position="1"/>
    </location>
</feature>
<sequence>MEDFSTRTYGTSGLDNRPLFGETSAKDRIINLVVGSLTSLLILVTLISAFVFPQLPPKPLNIFFAVCISLSSITACILIYWYRQGDLEPKFRNLIYYILFSIIMLCICANLYFHDVGK</sequence>
<reference key="1">
    <citation type="submission" date="2006-10" db="EMBL/GenBank/DDBJ databases">
        <authorList>
            <consortium name="NIH - Mammalian Gene Collection (MGC) project"/>
        </authorList>
    </citation>
    <scope>NUCLEOTIDE SEQUENCE [LARGE SCALE MRNA]</scope>
    <source>
        <strain>Hereford</strain>
        <tissue>Fetal muscle</tissue>
    </source>
</reference>
<protein>
    <recommendedName>
        <fullName>Transmembrane protein 243</fullName>
    </recommendedName>
</protein>
<dbReference type="EMBL" id="BC126746">
    <property type="protein sequence ID" value="AAI26747.1"/>
    <property type="molecule type" value="mRNA"/>
</dbReference>
<dbReference type="RefSeq" id="NP_001071512.1">
    <property type="nucleotide sequence ID" value="NM_001078044.1"/>
</dbReference>
<dbReference type="RefSeq" id="XP_005205335.1">
    <property type="nucleotide sequence ID" value="XM_005205278.5"/>
</dbReference>
<dbReference type="RefSeq" id="XP_015324133.1">
    <property type="nucleotide sequence ID" value="XM_015468647.1"/>
</dbReference>
<dbReference type="SMR" id="A0JNK6"/>
<dbReference type="FunCoup" id="A0JNK6">
    <property type="interactions" value="249"/>
</dbReference>
<dbReference type="STRING" id="9913.ENSBTAP00000072558"/>
<dbReference type="PaxDb" id="9913-ENSBTAP00000049794"/>
<dbReference type="GeneID" id="614280"/>
<dbReference type="KEGG" id="bta:614280"/>
<dbReference type="CTD" id="79161"/>
<dbReference type="VEuPathDB" id="HostDB:ENSBTAG00000038283"/>
<dbReference type="eggNOG" id="ENOG502RZ1F">
    <property type="taxonomic scope" value="Eukaryota"/>
</dbReference>
<dbReference type="HOGENOM" id="CLU_148752_0_0_1"/>
<dbReference type="InParanoid" id="A0JNK6"/>
<dbReference type="OMA" id="HAMLIHW"/>
<dbReference type="OrthoDB" id="17800at2759"/>
<dbReference type="TreeFam" id="TF329078"/>
<dbReference type="Proteomes" id="UP000009136">
    <property type="component" value="Chromosome 4"/>
</dbReference>
<dbReference type="Bgee" id="ENSBTAG00000038283">
    <property type="expression patterns" value="Expressed in lung and 105 other cell types or tissues"/>
</dbReference>
<dbReference type="GO" id="GO:0016020">
    <property type="term" value="C:membrane"/>
    <property type="evidence" value="ECO:0007669"/>
    <property type="project" value="UniProtKB-SubCell"/>
</dbReference>
<dbReference type="InterPro" id="IPR022564">
    <property type="entry name" value="DUF2678"/>
</dbReference>
<dbReference type="PANTHER" id="PTHR28603">
    <property type="entry name" value="TRANSMEMBRANE PROTEIN 243"/>
    <property type="match status" value="1"/>
</dbReference>
<dbReference type="PANTHER" id="PTHR28603:SF1">
    <property type="entry name" value="TRANSMEMBRANE PROTEIN 243"/>
    <property type="match status" value="1"/>
</dbReference>
<dbReference type="Pfam" id="PF10856">
    <property type="entry name" value="DUF2678"/>
    <property type="match status" value="1"/>
</dbReference>
<gene>
    <name type="primary">TMEM243</name>
</gene>
<organism>
    <name type="scientific">Bos taurus</name>
    <name type="common">Bovine</name>
    <dbReference type="NCBI Taxonomy" id="9913"/>
    <lineage>
        <taxon>Eukaryota</taxon>
        <taxon>Metazoa</taxon>
        <taxon>Chordata</taxon>
        <taxon>Craniata</taxon>
        <taxon>Vertebrata</taxon>
        <taxon>Euteleostomi</taxon>
        <taxon>Mammalia</taxon>
        <taxon>Eutheria</taxon>
        <taxon>Laurasiatheria</taxon>
        <taxon>Artiodactyla</taxon>
        <taxon>Ruminantia</taxon>
        <taxon>Pecora</taxon>
        <taxon>Bovidae</taxon>
        <taxon>Bovinae</taxon>
        <taxon>Bos</taxon>
    </lineage>
</organism>